<organismHost>
    <name type="scientific">Homo sapiens</name>
    <name type="common">Human</name>
    <dbReference type="NCBI Taxonomy" id="9606"/>
</organismHost>
<sequence>MDPGQRPNPFGAPGAIPKKPCLSQGSPGTSGSGAPCDEPSRSESPGEGPSGTGGSAAAGDITRQAVVAAITEWSRTRQLRISTGASEGKASIKDWIVCQVNSGKFPGVEWEDEERTRFRIPVTPLADPCFEWRRDGELGVVYIRERGNMPVDASFKGTRGRRRMLAALRRTRGLQEIGKGISQDGHHFLVFRVRKPEEEQCVECGVVAGAVHDFNNMARLLQEGFFSPGQCLPGEIVTPVPSCTTAEGQEAVIDWGRLFIRMYYNGEQVHELLTTSQSGCRISSALRRDPAVHYCAVGSPGQVWLPNVPNLACEIAKRELCDTLDACAKGILLTSSCNGIFCVCYHNGPVHFIGNTVPPDSGPLLLPQGKPTRIFNPNTFLVGLANSPLPAPSHVTCPLVKLWLGKPVAVGKLEPHAPSPRDFAARCSNFSDACVVLEIMPKPLWDAMQ</sequence>
<evidence type="ECO:0000255" key="1">
    <source>
        <dbReference type="PROSITE-ProRule" id="PRU00840"/>
    </source>
</evidence>
<evidence type="ECO:0000256" key="2">
    <source>
        <dbReference type="SAM" id="MobiDB-lite"/>
    </source>
</evidence>
<evidence type="ECO:0000269" key="3">
    <source>
    </source>
</evidence>
<evidence type="ECO:0000269" key="4">
    <source>
    </source>
</evidence>
<evidence type="ECO:0000269" key="5">
    <source>
    </source>
</evidence>
<evidence type="ECO:0000269" key="6">
    <source>
    </source>
</evidence>
<evidence type="ECO:0000269" key="7">
    <source>
    </source>
</evidence>
<evidence type="ECO:0000269" key="8">
    <source>
    </source>
</evidence>
<evidence type="ECO:0000269" key="9">
    <source>
    </source>
</evidence>
<evidence type="ECO:0000269" key="10">
    <source>
    </source>
</evidence>
<evidence type="ECO:0000269" key="11">
    <source>
    </source>
</evidence>
<evidence type="ECO:0007744" key="12">
    <source>
        <dbReference type="PDB" id="4YSI"/>
    </source>
</evidence>
<evidence type="ECO:0007829" key="13">
    <source>
        <dbReference type="PDB" id="4HLY"/>
    </source>
</evidence>
<gene>
    <name type="primary">vIRF-1</name>
</gene>
<feature type="chain" id="PRO_0000423778" description="VIRF-1">
    <location>
        <begin position="1"/>
        <end position="449"/>
    </location>
</feature>
<feature type="DNA-binding region" description="IRF tryptophan pentad repeat" evidence="1">
    <location>
        <begin position="89"/>
        <end position="195"/>
    </location>
</feature>
<feature type="region of interest" description="Disordered" evidence="2">
    <location>
        <begin position="1"/>
        <end position="60"/>
    </location>
</feature>
<feature type="modified residue" description="N6-propionyllysine; by host" evidence="8">
    <location>
        <position position="406"/>
    </location>
</feature>
<feature type="modified residue" description="N6-propionyllysine; by host" evidence="8">
    <location>
        <position position="442"/>
    </location>
</feature>
<feature type="mutagenesis site" description="Strong loss of propionylation." evidence="8">
    <original>K</original>
    <variation>R</variation>
    <location>
        <position position="406"/>
    </location>
</feature>
<feature type="mutagenesis site" description="Strong loss of propionylation." evidence="8">
    <original>K</original>
    <variation>R</variation>
    <location>
        <position position="442"/>
    </location>
</feature>
<feature type="helix" evidence="13">
    <location>
        <begin position="92"/>
        <end position="102"/>
    </location>
</feature>
<feature type="strand" evidence="13">
    <location>
        <begin position="109"/>
        <end position="112"/>
    </location>
</feature>
<feature type="strand" evidence="13">
    <location>
        <begin position="117"/>
        <end position="121"/>
    </location>
</feature>
<feature type="helix" evidence="13">
    <location>
        <begin position="132"/>
        <end position="135"/>
    </location>
</feature>
<feature type="helix" evidence="13">
    <location>
        <begin position="137"/>
        <end position="145"/>
    </location>
</feature>
<feature type="helix" evidence="13">
    <location>
        <begin position="153"/>
        <end position="155"/>
    </location>
</feature>
<feature type="strand" evidence="13">
    <location>
        <begin position="156"/>
        <end position="158"/>
    </location>
</feature>
<feature type="helix" evidence="13">
    <location>
        <begin position="159"/>
        <end position="169"/>
    </location>
</feature>
<feature type="strand" evidence="13">
    <location>
        <begin position="174"/>
        <end position="181"/>
    </location>
</feature>
<feature type="strand" evidence="13">
    <location>
        <begin position="187"/>
        <end position="193"/>
    </location>
</feature>
<keyword id="KW-0002">3D-structure</keyword>
<keyword id="KW-1035">Host cytoplasm</keyword>
<keyword id="KW-0945">Host-virus interaction</keyword>
<keyword id="KW-1090">Inhibition of host innate immune response by virus</keyword>
<keyword id="KW-1092">Inhibition of host IRF3 by virus</keyword>
<keyword id="KW-1113">Inhibition of host RLR pathway by virus</keyword>
<keyword id="KW-1185">Reference proteome</keyword>
<keyword id="KW-0832">Ubl conjugation</keyword>
<keyword id="KW-0899">Viral immunoevasion</keyword>
<organism>
    <name type="scientific">Human herpesvirus 8 type P (isolate GK18)</name>
    <name type="common">HHV-8</name>
    <name type="synonym">Kaposi's sarcoma-associated herpesvirus</name>
    <dbReference type="NCBI Taxonomy" id="868565"/>
    <lineage>
        <taxon>Viruses</taxon>
        <taxon>Duplodnaviria</taxon>
        <taxon>Heunggongvirae</taxon>
        <taxon>Peploviricota</taxon>
        <taxon>Herviviricetes</taxon>
        <taxon>Herpesvirales</taxon>
        <taxon>Orthoherpesviridae</taxon>
        <taxon>Gammaherpesvirinae</taxon>
        <taxon>Rhadinovirus</taxon>
        <taxon>Rhadinovirus humangamma8</taxon>
        <taxon>Human herpesvirus 8</taxon>
    </lineage>
</organism>
<protein>
    <recommendedName>
        <fullName>VIRF-1</fullName>
    </recommendedName>
</protein>
<accession>F5HF68</accession>
<dbReference type="EMBL" id="AF148805">
    <property type="protein sequence ID" value="ABD28909.1"/>
    <property type="molecule type" value="Genomic_DNA"/>
</dbReference>
<dbReference type="RefSeq" id="YP_001129411.1">
    <property type="nucleotide sequence ID" value="NC_009333.1"/>
</dbReference>
<dbReference type="PDB" id="4HLY">
    <property type="method" value="X-ray"/>
    <property type="resolution" value="1.48 A"/>
    <property type="chains" value="A/B=88-196"/>
</dbReference>
<dbReference type="PDB" id="4YSI">
    <property type="method" value="X-ray"/>
    <property type="resolution" value="1.02 A"/>
    <property type="chains" value="B=44-51"/>
</dbReference>
<dbReference type="PDBsum" id="4HLY"/>
<dbReference type="PDBsum" id="4YSI"/>
<dbReference type="SMR" id="F5HF68"/>
<dbReference type="BioGRID" id="1776967">
    <property type="interactions" value="27"/>
</dbReference>
<dbReference type="IntAct" id="F5HF68">
    <property type="interactions" value="2"/>
</dbReference>
<dbReference type="GeneID" id="4961464"/>
<dbReference type="KEGG" id="vg:4961464"/>
<dbReference type="EvolutionaryTrace" id="F5HF68"/>
<dbReference type="Proteomes" id="UP000000942">
    <property type="component" value="Segment"/>
</dbReference>
<dbReference type="GO" id="GO:0030430">
    <property type="term" value="C:host cell cytoplasm"/>
    <property type="evidence" value="ECO:0000314"/>
    <property type="project" value="ParkinsonsUK-UCL"/>
</dbReference>
<dbReference type="GO" id="GO:0042025">
    <property type="term" value="C:host cell nucleus"/>
    <property type="evidence" value="ECO:0000314"/>
    <property type="project" value="ParkinsonsUK-UCL"/>
</dbReference>
<dbReference type="GO" id="GO:0000981">
    <property type="term" value="F:DNA-binding transcription factor activity, RNA polymerase II-specific"/>
    <property type="evidence" value="ECO:0007669"/>
    <property type="project" value="TreeGrafter"/>
</dbReference>
<dbReference type="GO" id="GO:0019904">
    <property type="term" value="F:protein domain specific binding"/>
    <property type="evidence" value="ECO:0000353"/>
    <property type="project" value="CAFA"/>
</dbReference>
<dbReference type="GO" id="GO:0140311">
    <property type="term" value="F:protein sequestering activity"/>
    <property type="evidence" value="ECO:0000314"/>
    <property type="project" value="ParkinsonsUK-UCL"/>
</dbReference>
<dbReference type="GO" id="GO:0000978">
    <property type="term" value="F:RNA polymerase II cis-regulatory region sequence-specific DNA binding"/>
    <property type="evidence" value="ECO:0007669"/>
    <property type="project" value="TreeGrafter"/>
</dbReference>
<dbReference type="GO" id="GO:0002376">
    <property type="term" value="P:immune system process"/>
    <property type="evidence" value="ECO:0007669"/>
    <property type="project" value="TreeGrafter"/>
</dbReference>
<dbReference type="GO" id="GO:0044068">
    <property type="term" value="P:symbiont-mediated perturbation of host cellular process"/>
    <property type="evidence" value="ECO:0000314"/>
    <property type="project" value="ParkinsonsUK-UCL"/>
</dbReference>
<dbReference type="GO" id="GO:0039548">
    <property type="term" value="P:symbiont-mediated suppression of host cytoplasmic pattern recognition receptor signaling pathway via inhibition of IRF3 activity"/>
    <property type="evidence" value="ECO:0007669"/>
    <property type="project" value="UniProtKB-KW"/>
</dbReference>
<dbReference type="GO" id="GO:0052170">
    <property type="term" value="P:symbiont-mediated suppression of host innate immune response"/>
    <property type="evidence" value="ECO:0000314"/>
    <property type="project" value="UniProt"/>
</dbReference>
<dbReference type="Gene3D" id="2.60.200.10">
    <property type="match status" value="1"/>
</dbReference>
<dbReference type="Gene3D" id="1.10.10.10">
    <property type="entry name" value="Winged helix-like DNA-binding domain superfamily/Winged helix DNA-binding domain"/>
    <property type="match status" value="1"/>
</dbReference>
<dbReference type="InterPro" id="IPR001346">
    <property type="entry name" value="Interferon_reg_fact_DNA-bd_dom"/>
</dbReference>
<dbReference type="InterPro" id="IPR019471">
    <property type="entry name" value="Interferon_reg_factor-3"/>
</dbReference>
<dbReference type="InterPro" id="IPR017855">
    <property type="entry name" value="SMAD-like_dom_sf"/>
</dbReference>
<dbReference type="InterPro" id="IPR008984">
    <property type="entry name" value="SMAD_FHA_dom_sf"/>
</dbReference>
<dbReference type="InterPro" id="IPR036388">
    <property type="entry name" value="WH-like_DNA-bd_sf"/>
</dbReference>
<dbReference type="InterPro" id="IPR036390">
    <property type="entry name" value="WH_DNA-bd_sf"/>
</dbReference>
<dbReference type="PANTHER" id="PTHR11949">
    <property type="entry name" value="INTERFERON REGULATORY FACTOR"/>
    <property type="match status" value="1"/>
</dbReference>
<dbReference type="PANTHER" id="PTHR11949:SF53">
    <property type="entry name" value="IRF TRYPTOPHAN PENTAD REPEAT DOMAIN-CONTAINING PROTEIN"/>
    <property type="match status" value="1"/>
</dbReference>
<dbReference type="Pfam" id="PF00605">
    <property type="entry name" value="IRF"/>
    <property type="match status" value="1"/>
</dbReference>
<dbReference type="Pfam" id="PF10401">
    <property type="entry name" value="IRF-3"/>
    <property type="match status" value="1"/>
</dbReference>
<dbReference type="SMART" id="SM00348">
    <property type="entry name" value="IRF"/>
    <property type="match status" value="1"/>
</dbReference>
<dbReference type="SMART" id="SM01243">
    <property type="entry name" value="IRF-3"/>
    <property type="match status" value="1"/>
</dbReference>
<dbReference type="SUPFAM" id="SSF49879">
    <property type="entry name" value="SMAD/FHA domain"/>
    <property type="match status" value="1"/>
</dbReference>
<dbReference type="SUPFAM" id="SSF46785">
    <property type="entry name" value="Winged helix' DNA-binding domain"/>
    <property type="match status" value="1"/>
</dbReference>
<dbReference type="PROSITE" id="PS51507">
    <property type="entry name" value="IRF_2"/>
    <property type="match status" value="1"/>
</dbReference>
<name>VIRF1_HHV8P</name>
<proteinExistence type="evidence at protein level"/>
<comment type="function">
    <text evidence="3 4 5 6 7 8 9 10 11">Plays a role in the inhibition of host innate response by repressing the expression of interferon-inducible genes and blocking host IRF1- and IRF3-mediated transcription. Blocks the interaction between host IRF3 and CREBBP. Regulates the host cellular metabolism by increasing glucose uptake, ATP production and lactate secretion through down-regulation of heterogeneous nuclear ribonuclear protein Q1/SYNCRIP. Mechanistically, induces ubiquitination and degradation of SYNCRIP through the ubiquitin-proteasome pathway by recruiting KLHL3/CUL3 ubiquitin ligase complex (PubMed:35538151). Disrupts host TP53 signaling pathway during viral infection by interacting with host USP7 and thereby decreasing the availability of USP7 for deubiquitinating and stabilizing TP53 (PubMed:26786098). Plays a role in the global inhibition of protein ISGylation by interacting with host HERC5 leading to its inhibition (PubMed:26355087). Promotes its own propionylation by blocking SIRT6 interaction with ubiquitin-specific peptidase 10/USP10 leading to SIRT6 degradation via a ubiquitin-proteasome pathway (PubMed:37023208). In turn, propionylation is required to block IRF3-CBP/p300 recruitment and to repress the STING DNA sensing pathway (PubMed:37023208). Plays a role in the activation of mitophagy during infection via interaction with the host proteins NIX/BNIP3L, TUFM and GABARAPL1 thereby inhibiting antiviral responses and contributing to productive replication (PubMed:31324791, PubMed:37459327).</text>
</comment>
<comment type="subunit">
    <text evidence="3 4 5 7 8 9">Forms homodimers (PubMed:37459327). Interacts with host IRF3, IRF7, and CREBBP (PubMed:11314014). Interacts with host SYNCRIP (PubMed:35538151). Interacts with host USP7 (PubMed:26786098). Interacts (via C-terminus) with host HERC5 (PubMed:26355087). Interacts with host GABARAPL1 (PubMed:37459327). Interacts with host SIRT6 (PubMed:37023208).</text>
</comment>
<comment type="subcellular location">
    <subcellularLocation>
        <location evidence="7 9">Host cytoplasm</location>
    </subcellularLocation>
</comment>
<comment type="PTM">
    <text evidence="4">ISGylated.</text>
</comment>
<comment type="PTM">
    <text evidence="4">Propionylated in lysine residues Lys-406 and Lys-442, which is required for effective inhibition of IFN-beta production and antiviral signaling.</text>
</comment>
<comment type="similarity">
    <text evidence="1">Belongs to the IRF family.</text>
</comment>
<reference key="1">
    <citation type="journal article" date="1999" name="J. Virol.">
        <title>Identification of a spliced gene from Kaposi's sarcoma-associated herpesvirus encoding a protein with similarities to latent membrane proteins 1 and 2A of Epstein-Barr virus.</title>
        <authorList>
            <person name="Glenn M."/>
            <person name="Rainbow L."/>
            <person name="Aurade F."/>
            <person name="Davison A."/>
            <person name="Schulz T.F."/>
        </authorList>
    </citation>
    <scope>NUCLEOTIDE SEQUENCE [LARGE SCALE GENOMIC DNA]</scope>
</reference>
<reference key="2">
    <citation type="journal article" date="2006" name="J. Gen. Virol.">
        <title>Kaposi's sarcoma-associated herpesvirus immune modulation: an overview.</title>
        <authorList>
            <person name="Rezaee S.A.R."/>
            <person name="Cunningham C."/>
            <person name="Davison A.J."/>
            <person name="Blackbourn D.J."/>
        </authorList>
    </citation>
    <scope>NUCLEOTIDE SEQUENCE [LARGE SCALE GENOMIC DNA]</scope>
</reference>
<reference key="3">
    <citation type="journal article" date="1997" name="Oncogene">
        <title>KSHV ORF K9 (vIRF) is an oncogene which inhibits the interferon signaling pathway.</title>
        <authorList>
            <person name="Gao S.J."/>
            <person name="Boshoff C."/>
            <person name="Jayachandra S."/>
            <person name="Weiss R.A."/>
            <person name="Chang Y."/>
            <person name="Moore P.S."/>
        </authorList>
    </citation>
    <scope>FUNCTION</scope>
</reference>
<reference key="4">
    <citation type="journal article" date="1998" name="J. Virol.">
        <title>Human herpesvirus 8 encodes an interferon regulatory factor (IRF) homolog that represses IRF-1-mediated transcription.</title>
        <authorList>
            <person name="Zimring J.C."/>
            <person name="Goodbourn S."/>
            <person name="Offermann M.K."/>
        </authorList>
    </citation>
    <scope>FUNCTION</scope>
</reference>
<reference key="5">
    <citation type="journal article" date="2001" name="Oncogene">
        <title>HHV-8 encoded vIRF-1 represses the interferon antiviral response by blocking IRF-3 recruitment of the CBP/p300 coactivators.</title>
        <authorList>
            <person name="Lin R."/>
            <person name="Genin P."/>
            <person name="Mamane Y."/>
            <person name="Sgarbanti M."/>
            <person name="Battistini A."/>
            <person name="Harrington W.J. Jr."/>
            <person name="Barber G.N."/>
            <person name="Hiscott J."/>
        </authorList>
    </citation>
    <scope>FUNCTION</scope>
    <scope>INTERACTION WITH HOST IRF3; IRF7 AND CREBBP</scope>
</reference>
<reference key="6">
    <citation type="journal article" date="2015" name="J. Virol.">
        <title>Kaposi's Sarcoma-Associated Herpesvirus Viral Interferon Regulatory Factor 1 Interacts with a Member of the Interferon-Stimulated Gene 15 Pathway.</title>
        <authorList>
            <person name="Jacobs S.R."/>
            <person name="Stopford C.M."/>
            <person name="West J.A."/>
            <person name="Bennett C.L."/>
            <person name="Giffin L."/>
            <person name="Damania B."/>
        </authorList>
    </citation>
    <scope>FUNCTION</scope>
    <scope>INTERACTION WITH HOST HERC5</scope>
    <scope>ISGYLATION</scope>
</reference>
<reference key="7">
    <citation type="journal article" date="2019" name="Nat. Commun.">
        <title>Activation of NIX-mediated mitophagy by an interferon regulatory factor homologue of human herpesvirus.</title>
        <authorList>
            <person name="Vo M.T."/>
            <person name="Smith B.J."/>
            <person name="Nicholas J."/>
            <person name="Choi Y.B."/>
        </authorList>
    </citation>
    <scope>FUNCTION</scope>
    <scope>INTERACTION WITH HOST BNIP3L</scope>
</reference>
<reference key="8">
    <citation type="journal article" date="2022" name="Cell Death Differ.">
        <title>A viral interferon regulatory factor degrades RNA-binding protein hnRNP Q1 to enhance aerobic glycolysis via recruiting E3 ubiquitin ligase KLHL3 and decaying GDPD1 mRNA.</title>
        <authorList>
            <person name="Qi X."/>
            <person name="Yan Q."/>
            <person name="Shang Y."/>
            <person name="Zhao R."/>
            <person name="Ding X."/>
            <person name="Gao S.J."/>
            <person name="Li W."/>
            <person name="Lu C."/>
        </authorList>
    </citation>
    <scope>FUNCTION</scope>
    <scope>INTERACTION WITH HOST SYNCRIP</scope>
    <scope>SUBCELLULAR LOCATION</scope>
</reference>
<reference key="9">
    <citation type="journal article" date="2023" name="PLoS Pathog.">
        <title>The mitophagy receptor NIX induces vIRF-1 oligomerization and interaction with GABARAPL1 for the promotion of HHV-8 reactivation-induced mitophagy.</title>
        <authorList>
            <person name="Vo M.T."/>
            <person name="Choi C.Y."/>
            <person name="Choi Y.B."/>
        </authorList>
    </citation>
    <scope>FUNCTION</scope>
    <scope>INTERACTION WITH HOST GABARAPL1</scope>
    <scope>SUBCELLULAR LOCATION</scope>
    <scope>SUBUNIT</scope>
</reference>
<reference key="10">
    <citation type="journal article" date="2023" name="PLoS Pathog.">
        <title>Immune evasion strategy involving propionylation by the KSHV interferon regulatory factor 1 (vIRF1).</title>
        <authorList>
            <person name="Shi J."/>
            <person name="Jia X."/>
            <person name="He Y."/>
            <person name="Ma X."/>
            <person name="Qi X."/>
            <person name="Li W."/>
            <person name="Gao S.J."/>
            <person name="Yan Q."/>
            <person name="Lu C."/>
        </authorList>
    </citation>
    <scope>FUNCTION</scope>
    <scope>PROPIONYLATION AT LYS-406 AND LYS-442</scope>
    <scope>MUTAGENESIS OF LYS-406 AND LYS-442</scope>
    <scope>SUBCELLULAR LOCATION</scope>
    <scope>INTERACTION WITH HOST SIRT6</scope>
</reference>
<reference evidence="12" key="11">
    <citation type="journal article" date="2016" name="J. Biol. Chem.">
        <title>Identification of Kaposi Sarcoma Herpesvirus (KSHV) vIRF1 Protein as a Novel Interaction Partner of Human Deubiquitinase USP7.</title>
        <authorList>
            <person name="Chavoshi S."/>
            <person name="Egorova O."/>
            <person name="Lacdao I.K."/>
            <person name="Farhadi S."/>
            <person name="Sheng Y."/>
            <person name="Saridakis V."/>
        </authorList>
    </citation>
    <scope>X-RAY CRYSTALLOGRAPHY (1.02 ANGSTROMS) OF 44-51</scope>
    <scope>INTERACTION WITH HOST USP7</scope>
    <scope>FUNCTION</scope>
</reference>